<comment type="function">
    <text evidence="1">Catalyzes the interconversion of methylthioribose-1-phosphate (MTR-1-P) into methylthioribulose-1-phosphate (MTRu-1-P).</text>
</comment>
<comment type="catalytic activity">
    <reaction evidence="1">
        <text>5-(methylsulfanyl)-alpha-D-ribose 1-phosphate = 5-(methylsulfanyl)-D-ribulose 1-phosphate</text>
        <dbReference type="Rhea" id="RHEA:19989"/>
        <dbReference type="ChEBI" id="CHEBI:58533"/>
        <dbReference type="ChEBI" id="CHEBI:58548"/>
        <dbReference type="EC" id="5.3.1.23"/>
    </reaction>
</comment>
<comment type="pathway">
    <text evidence="1">Amino-acid biosynthesis; L-methionine biosynthesis via salvage pathway; L-methionine from S-methyl-5-thio-alpha-D-ribose 1-phosphate: step 1/6.</text>
</comment>
<comment type="subunit">
    <text evidence="1">Homodimer.</text>
</comment>
<comment type="similarity">
    <text evidence="1">Belongs to the EIF-2B alpha/beta/delta subunits family. MtnA subfamily.</text>
</comment>
<proteinExistence type="inferred from homology"/>
<gene>
    <name evidence="1" type="primary">mtnA</name>
    <name type="ordered locus">BALH_3649</name>
</gene>
<accession>A0RI38</accession>
<protein>
    <recommendedName>
        <fullName evidence="1">Methylthioribose-1-phosphate isomerase</fullName>
        <shortName evidence="1">M1Pi</shortName>
        <shortName evidence="1">MTR-1-P isomerase</shortName>
        <ecNumber evidence="1">5.3.1.23</ecNumber>
    </recommendedName>
    <alternativeName>
        <fullName evidence="1">S-methyl-5-thioribose-1-phosphate isomerase</fullName>
    </alternativeName>
</protein>
<evidence type="ECO:0000255" key="1">
    <source>
        <dbReference type="HAMAP-Rule" id="MF_01678"/>
    </source>
</evidence>
<dbReference type="EC" id="5.3.1.23" evidence="1"/>
<dbReference type="EMBL" id="CP000485">
    <property type="protein sequence ID" value="ABK86881.1"/>
    <property type="molecule type" value="Genomic_DNA"/>
</dbReference>
<dbReference type="RefSeq" id="WP_000109048.1">
    <property type="nucleotide sequence ID" value="NC_008600.1"/>
</dbReference>
<dbReference type="SMR" id="A0RI38"/>
<dbReference type="KEGG" id="btl:BALH_3649"/>
<dbReference type="HOGENOM" id="CLU_016218_1_2_9"/>
<dbReference type="UniPathway" id="UPA00904">
    <property type="reaction ID" value="UER00874"/>
</dbReference>
<dbReference type="GO" id="GO:0046523">
    <property type="term" value="F:S-methyl-5-thioribose-1-phosphate isomerase activity"/>
    <property type="evidence" value="ECO:0007669"/>
    <property type="project" value="UniProtKB-UniRule"/>
</dbReference>
<dbReference type="GO" id="GO:0019509">
    <property type="term" value="P:L-methionine salvage from methylthioadenosine"/>
    <property type="evidence" value="ECO:0007669"/>
    <property type="project" value="UniProtKB-UniRule"/>
</dbReference>
<dbReference type="FunFam" id="1.20.120.420:FF:000005">
    <property type="entry name" value="Methylthioribose-1-phosphate isomerase"/>
    <property type="match status" value="1"/>
</dbReference>
<dbReference type="FunFam" id="3.40.50.10470:FF:000006">
    <property type="entry name" value="Methylthioribose-1-phosphate isomerase"/>
    <property type="match status" value="1"/>
</dbReference>
<dbReference type="Gene3D" id="1.20.120.420">
    <property type="entry name" value="translation initiation factor eif-2b, domain 1"/>
    <property type="match status" value="1"/>
</dbReference>
<dbReference type="Gene3D" id="3.40.50.10470">
    <property type="entry name" value="Translation initiation factor eif-2b, domain 2"/>
    <property type="match status" value="1"/>
</dbReference>
<dbReference type="HAMAP" id="MF_01678">
    <property type="entry name" value="Salvage_MtnA"/>
    <property type="match status" value="1"/>
</dbReference>
<dbReference type="InterPro" id="IPR000649">
    <property type="entry name" value="IF-2B-related"/>
</dbReference>
<dbReference type="InterPro" id="IPR005251">
    <property type="entry name" value="IF-M1Pi"/>
</dbReference>
<dbReference type="InterPro" id="IPR042529">
    <property type="entry name" value="IF_2B-like_C"/>
</dbReference>
<dbReference type="InterPro" id="IPR011559">
    <property type="entry name" value="Initiation_fac_2B_a/b/d"/>
</dbReference>
<dbReference type="InterPro" id="IPR027363">
    <property type="entry name" value="M1Pi_N"/>
</dbReference>
<dbReference type="InterPro" id="IPR037171">
    <property type="entry name" value="NagB/RpiA_transferase-like"/>
</dbReference>
<dbReference type="NCBIfam" id="TIGR00524">
    <property type="entry name" value="eIF-2B_rel"/>
    <property type="match status" value="1"/>
</dbReference>
<dbReference type="NCBIfam" id="NF004326">
    <property type="entry name" value="PRK05720.1"/>
    <property type="match status" value="1"/>
</dbReference>
<dbReference type="NCBIfam" id="TIGR00512">
    <property type="entry name" value="salvage_mtnA"/>
    <property type="match status" value="1"/>
</dbReference>
<dbReference type="PANTHER" id="PTHR43475">
    <property type="entry name" value="METHYLTHIORIBOSE-1-PHOSPHATE ISOMERASE"/>
    <property type="match status" value="1"/>
</dbReference>
<dbReference type="PANTHER" id="PTHR43475:SF4">
    <property type="entry name" value="METHYLTHIORIBOSE-1-PHOSPHATE ISOMERASE"/>
    <property type="match status" value="1"/>
</dbReference>
<dbReference type="Pfam" id="PF01008">
    <property type="entry name" value="IF-2B"/>
    <property type="match status" value="1"/>
</dbReference>
<dbReference type="SUPFAM" id="SSF100950">
    <property type="entry name" value="NagB/RpiA/CoA transferase-like"/>
    <property type="match status" value="1"/>
</dbReference>
<feature type="chain" id="PRO_0000357152" description="Methylthioribose-1-phosphate isomerase">
    <location>
        <begin position="1"/>
        <end position="351"/>
    </location>
</feature>
<feature type="active site" description="Proton donor" evidence="1">
    <location>
        <position position="240"/>
    </location>
</feature>
<feature type="binding site" evidence="1">
    <location>
        <begin position="51"/>
        <end position="53"/>
    </location>
    <ligand>
        <name>substrate</name>
    </ligand>
</feature>
<feature type="binding site" evidence="1">
    <location>
        <position position="94"/>
    </location>
    <ligand>
        <name>substrate</name>
    </ligand>
</feature>
<feature type="binding site" evidence="1">
    <location>
        <position position="199"/>
    </location>
    <ligand>
        <name>substrate</name>
    </ligand>
</feature>
<feature type="binding site" evidence="1">
    <location>
        <begin position="250"/>
        <end position="251"/>
    </location>
    <ligand>
        <name>substrate</name>
    </ligand>
</feature>
<feature type="site" description="Transition state stabilizer" evidence="1">
    <location>
        <position position="160"/>
    </location>
</feature>
<reference key="1">
    <citation type="journal article" date="2007" name="J. Bacteriol.">
        <title>The complete genome sequence of Bacillus thuringiensis Al Hakam.</title>
        <authorList>
            <person name="Challacombe J.F."/>
            <person name="Altherr M.R."/>
            <person name="Xie G."/>
            <person name="Bhotika S.S."/>
            <person name="Brown N."/>
            <person name="Bruce D."/>
            <person name="Campbell C.S."/>
            <person name="Campbell M.L."/>
            <person name="Chen J."/>
            <person name="Chertkov O."/>
            <person name="Cleland C."/>
            <person name="Dimitrijevic M."/>
            <person name="Doggett N.A."/>
            <person name="Fawcett J.J."/>
            <person name="Glavina T."/>
            <person name="Goodwin L.A."/>
            <person name="Green L.D."/>
            <person name="Han C.S."/>
            <person name="Hill K.K."/>
            <person name="Hitchcock P."/>
            <person name="Jackson P.J."/>
            <person name="Keim P."/>
            <person name="Kewalramani A.R."/>
            <person name="Longmire J."/>
            <person name="Lucas S."/>
            <person name="Malfatti S."/>
            <person name="Martinez D."/>
            <person name="McMurry K."/>
            <person name="Meincke L.J."/>
            <person name="Misra M."/>
            <person name="Moseman B.L."/>
            <person name="Mundt M."/>
            <person name="Munk A.C."/>
            <person name="Okinaka R.T."/>
            <person name="Parson-Quintana B."/>
            <person name="Reilly L.P."/>
            <person name="Richardson P."/>
            <person name="Robinson D.L."/>
            <person name="Saunders E."/>
            <person name="Tapia R."/>
            <person name="Tesmer J.G."/>
            <person name="Thayer N."/>
            <person name="Thompson L.S."/>
            <person name="Tice H."/>
            <person name="Ticknor L.O."/>
            <person name="Wills P.L."/>
            <person name="Gilna P."/>
            <person name="Brettin T.S."/>
        </authorList>
    </citation>
    <scope>NUCLEOTIDE SEQUENCE [LARGE SCALE GENOMIC DNA]</scope>
    <source>
        <strain>Al Hakam</strain>
    </source>
</reference>
<keyword id="KW-0028">Amino-acid biosynthesis</keyword>
<keyword id="KW-0413">Isomerase</keyword>
<keyword id="KW-0486">Methionine biosynthesis</keyword>
<sequence>MSTVVTIPRSVSWKGDAIAVLKQTKLPHSTEYKTLTTIEEVWKSIVMLEVRGAPAIGIVAAFGLALASKKYTTLHIEEFQKKFNRDCNYLGTSRPTAVNLFWAIDRMRESIQEITTIKEAQKILEEEALRIQQEDEAVCRSIGEHALTCFKDGDNILTICNAGSIATARYGTALAPFYIGKEKGVRLHAYACETRPVLQGGRLTTWELKQAGIDVTLITDNTAAHAIQTKEINAIIVGADRIVANGDTANKIGTMNLAILAKYFDIPFYVAAPLSTFDITKQTGAEIVIEERDETEVTKIFGKQVAPVGTTVYNPAFDVTPNKLITGIITEKGIICGDYKREIASLFEKTS</sequence>
<organism>
    <name type="scientific">Bacillus thuringiensis (strain Al Hakam)</name>
    <dbReference type="NCBI Taxonomy" id="412694"/>
    <lineage>
        <taxon>Bacteria</taxon>
        <taxon>Bacillati</taxon>
        <taxon>Bacillota</taxon>
        <taxon>Bacilli</taxon>
        <taxon>Bacillales</taxon>
        <taxon>Bacillaceae</taxon>
        <taxon>Bacillus</taxon>
        <taxon>Bacillus cereus group</taxon>
    </lineage>
</organism>
<name>MTNA_BACAH</name>